<comment type="function">
    <text>Gamma chains make up the fetal hemoglobin F, in combination with alpha chains.</text>
</comment>
<comment type="subunit">
    <text>Heterotetramer of two alpha chains and two gamma chains in fetal hemoglobin (Hb F).</text>
</comment>
<comment type="tissue specificity">
    <text>Red blood cells.</text>
</comment>
<comment type="similarity">
    <text evidence="1">Belongs to the globin family.</text>
</comment>
<protein>
    <recommendedName>
        <fullName>Hemoglobin subunit gamma</fullName>
    </recommendedName>
    <alternativeName>
        <fullName>Gamma-globin</fullName>
    </alternativeName>
    <alternativeName>
        <fullName>Hemoglobin gamma chain</fullName>
    </alternativeName>
</protein>
<organism>
    <name type="scientific">Brachyteles arachnoides</name>
    <name type="common">Southern muriqui</name>
    <name type="synonym">Woolly spider monkey</name>
    <dbReference type="NCBI Taxonomy" id="30594"/>
    <lineage>
        <taxon>Eukaryota</taxon>
        <taxon>Metazoa</taxon>
        <taxon>Chordata</taxon>
        <taxon>Craniata</taxon>
        <taxon>Vertebrata</taxon>
        <taxon>Euteleostomi</taxon>
        <taxon>Mammalia</taxon>
        <taxon>Eutheria</taxon>
        <taxon>Euarchontoglires</taxon>
        <taxon>Primates</taxon>
        <taxon>Haplorrhini</taxon>
        <taxon>Platyrrhini</taxon>
        <taxon>Atelidae</taxon>
        <taxon>Atelinae</taxon>
        <taxon>Brachyteles</taxon>
    </lineage>
</organism>
<keyword id="KW-0349">Heme</keyword>
<keyword id="KW-0408">Iron</keyword>
<keyword id="KW-0479">Metal-binding</keyword>
<keyword id="KW-0561">Oxygen transport</keyword>
<keyword id="KW-0813">Transport</keyword>
<name>HBG_BRAAR</name>
<proteinExistence type="evidence at transcript level"/>
<gene>
    <name type="primary">HBG</name>
</gene>
<reference key="1">
    <citation type="journal article" date="1999" name="Mol. Phylogenet. Evol.">
        <title>Molecular phylogeny of ateline new world monkeys (Platyrrhini, atelinae) based on gamma-globin gene sequences: evidence that Brachyteles is the sister group of Lagothrix.</title>
        <authorList>
            <person name="Meireles C.M."/>
            <person name="Czelusniak J."/>
            <person name="Schneider M.P.C."/>
            <person name="Muniz J.A.P.C."/>
            <person name="Brigido M.C."/>
            <person name="Ferreira H.S."/>
            <person name="Goodman M."/>
        </authorList>
    </citation>
    <scope>NUCLEOTIDE SEQUENCE [GENOMIC DNA]</scope>
</reference>
<accession>P68071</accession>
<accession>P06891</accession>
<evidence type="ECO:0000255" key="1">
    <source>
        <dbReference type="PROSITE-ProRule" id="PRU00238"/>
    </source>
</evidence>
<feature type="chain" id="PRO_0000053239" description="Hemoglobin subunit gamma">
    <location>
        <begin position="1"/>
        <end position="147"/>
    </location>
</feature>
<feature type="domain" description="Globin" evidence="1">
    <location>
        <begin position="3"/>
        <end position="147"/>
    </location>
</feature>
<feature type="binding site" description="distal binding residue" evidence="1">
    <location>
        <position position="64"/>
    </location>
    <ligand>
        <name>heme b</name>
        <dbReference type="ChEBI" id="CHEBI:60344"/>
    </ligand>
    <ligandPart>
        <name>Fe</name>
        <dbReference type="ChEBI" id="CHEBI:18248"/>
    </ligandPart>
</feature>
<feature type="binding site" description="proximal binding residue" evidence="1">
    <location>
        <position position="93"/>
    </location>
    <ligand>
        <name>heme b</name>
        <dbReference type="ChEBI" id="CHEBI:60344"/>
    </ligand>
    <ligandPart>
        <name>Fe</name>
        <dbReference type="ChEBI" id="CHEBI:18248"/>
    </ligandPart>
</feature>
<sequence>MSNFTAEDKAAITSLWGKVNVEDAGGETLGRLLVVYPWTQRFFDSFGSLSSPSAIMGNPKVKAHGVKVLTSLGEAIKNLDDLKGTFGQLSELHCDKLHVDPENFRLLGNVLVTVLAILHGKEFTPEVQASWQKMVAGVASALASRYH</sequence>
<dbReference type="EMBL" id="AF030098">
    <property type="protein sequence ID" value="AAB92232.1"/>
    <property type="molecule type" value="Genomic_DNA"/>
</dbReference>
<dbReference type="SMR" id="P68071"/>
<dbReference type="GO" id="GO:0072562">
    <property type="term" value="C:blood microparticle"/>
    <property type="evidence" value="ECO:0007669"/>
    <property type="project" value="TreeGrafter"/>
</dbReference>
<dbReference type="GO" id="GO:0031838">
    <property type="term" value="C:haptoglobin-hemoglobin complex"/>
    <property type="evidence" value="ECO:0007669"/>
    <property type="project" value="TreeGrafter"/>
</dbReference>
<dbReference type="GO" id="GO:0005833">
    <property type="term" value="C:hemoglobin complex"/>
    <property type="evidence" value="ECO:0007669"/>
    <property type="project" value="InterPro"/>
</dbReference>
<dbReference type="GO" id="GO:0031720">
    <property type="term" value="F:haptoglobin binding"/>
    <property type="evidence" value="ECO:0007669"/>
    <property type="project" value="TreeGrafter"/>
</dbReference>
<dbReference type="GO" id="GO:0020037">
    <property type="term" value="F:heme binding"/>
    <property type="evidence" value="ECO:0007669"/>
    <property type="project" value="InterPro"/>
</dbReference>
<dbReference type="GO" id="GO:0031721">
    <property type="term" value="F:hemoglobin alpha binding"/>
    <property type="evidence" value="ECO:0007669"/>
    <property type="project" value="TreeGrafter"/>
</dbReference>
<dbReference type="GO" id="GO:0046872">
    <property type="term" value="F:metal ion binding"/>
    <property type="evidence" value="ECO:0007669"/>
    <property type="project" value="UniProtKB-KW"/>
</dbReference>
<dbReference type="GO" id="GO:0043177">
    <property type="term" value="F:organic acid binding"/>
    <property type="evidence" value="ECO:0007669"/>
    <property type="project" value="TreeGrafter"/>
</dbReference>
<dbReference type="GO" id="GO:0019825">
    <property type="term" value="F:oxygen binding"/>
    <property type="evidence" value="ECO:0007669"/>
    <property type="project" value="InterPro"/>
</dbReference>
<dbReference type="GO" id="GO:0005344">
    <property type="term" value="F:oxygen carrier activity"/>
    <property type="evidence" value="ECO:0007669"/>
    <property type="project" value="UniProtKB-KW"/>
</dbReference>
<dbReference type="GO" id="GO:0004601">
    <property type="term" value="F:peroxidase activity"/>
    <property type="evidence" value="ECO:0007669"/>
    <property type="project" value="TreeGrafter"/>
</dbReference>
<dbReference type="GO" id="GO:0042744">
    <property type="term" value="P:hydrogen peroxide catabolic process"/>
    <property type="evidence" value="ECO:0007669"/>
    <property type="project" value="TreeGrafter"/>
</dbReference>
<dbReference type="CDD" id="cd08925">
    <property type="entry name" value="Hb-beta-like"/>
    <property type="match status" value="1"/>
</dbReference>
<dbReference type="FunFam" id="1.10.490.10:FF:000001">
    <property type="entry name" value="Hemoglobin subunit beta"/>
    <property type="match status" value="1"/>
</dbReference>
<dbReference type="Gene3D" id="1.10.490.10">
    <property type="entry name" value="Globins"/>
    <property type="match status" value="1"/>
</dbReference>
<dbReference type="InterPro" id="IPR000971">
    <property type="entry name" value="Globin"/>
</dbReference>
<dbReference type="InterPro" id="IPR009050">
    <property type="entry name" value="Globin-like_sf"/>
</dbReference>
<dbReference type="InterPro" id="IPR012292">
    <property type="entry name" value="Globin/Proto"/>
</dbReference>
<dbReference type="InterPro" id="IPR002337">
    <property type="entry name" value="Hemoglobin_b"/>
</dbReference>
<dbReference type="InterPro" id="IPR050056">
    <property type="entry name" value="Hemoglobin_oxygen_transport"/>
</dbReference>
<dbReference type="PANTHER" id="PTHR11442">
    <property type="entry name" value="HEMOGLOBIN FAMILY MEMBER"/>
    <property type="match status" value="1"/>
</dbReference>
<dbReference type="PANTHER" id="PTHR11442:SF52">
    <property type="entry name" value="HEMOGLOBIN SUBUNIT GAMMA-1"/>
    <property type="match status" value="1"/>
</dbReference>
<dbReference type="Pfam" id="PF00042">
    <property type="entry name" value="Globin"/>
    <property type="match status" value="1"/>
</dbReference>
<dbReference type="PRINTS" id="PR00814">
    <property type="entry name" value="BETAHAEM"/>
</dbReference>
<dbReference type="SUPFAM" id="SSF46458">
    <property type="entry name" value="Globin-like"/>
    <property type="match status" value="1"/>
</dbReference>
<dbReference type="PROSITE" id="PS01033">
    <property type="entry name" value="GLOBIN"/>
    <property type="match status" value="1"/>
</dbReference>